<keyword id="KW-0143">Chaperone</keyword>
<keyword id="KW-0963">Cytoplasm</keyword>
<keyword id="KW-0235">DNA replication</keyword>
<keyword id="KW-0479">Metal-binding</keyword>
<keyword id="KW-1185">Reference proteome</keyword>
<keyword id="KW-0677">Repeat</keyword>
<keyword id="KW-0346">Stress response</keyword>
<keyword id="KW-0862">Zinc</keyword>
<keyword id="KW-0863">Zinc-finger</keyword>
<protein>
    <recommendedName>
        <fullName evidence="1">Chaperone protein DnaJ</fullName>
    </recommendedName>
</protein>
<accession>Q5QXL2</accession>
<reference key="1">
    <citation type="journal article" date="2004" name="Proc. Natl. Acad. Sci. U.S.A.">
        <title>Genome sequence of the deep-sea gamma-proteobacterium Idiomarina loihiensis reveals amino acid fermentation as a source of carbon and energy.</title>
        <authorList>
            <person name="Hou S."/>
            <person name="Saw J.H."/>
            <person name="Lee K.S."/>
            <person name="Freitas T.A."/>
            <person name="Belisle C."/>
            <person name="Kawarabayasi Y."/>
            <person name="Donachie S.P."/>
            <person name="Pikina A."/>
            <person name="Galperin M.Y."/>
            <person name="Koonin E.V."/>
            <person name="Makarova K.S."/>
            <person name="Omelchenko M.V."/>
            <person name="Sorokin A."/>
            <person name="Wolf Y.I."/>
            <person name="Li Q.X."/>
            <person name="Keum Y.S."/>
            <person name="Campbell S."/>
            <person name="Denery J."/>
            <person name="Aizawa S."/>
            <person name="Shibata S."/>
            <person name="Malahoff A."/>
            <person name="Alam M."/>
        </authorList>
    </citation>
    <scope>NUCLEOTIDE SEQUENCE [LARGE SCALE GENOMIC DNA]</scope>
    <source>
        <strain>ATCC BAA-735 / DSM 15497 / L2-TR</strain>
    </source>
</reference>
<evidence type="ECO:0000255" key="1">
    <source>
        <dbReference type="HAMAP-Rule" id="MF_01152"/>
    </source>
</evidence>
<sequence length="384" mass="42243">MATQDFYQVLGVSKDANERDIKKAYKRMAMKYHPDRTEGDKDMEIKFKEIKQAYEVLSDPQKRQMYDQYGHEAFEQARQGGAGHGAGGFGGGGADFADIFGDVFGDIFGGGRRQQARAQRGADLRYNLDMSLEEAVRGKTVELEIPTLVECRDCNGSGAKKGSKPQTCGHCHGSGQIQMRQGFFAVQQTCPQCRGTGTIIKDPCRTCHGHGRKEETKTLSVKIPAGVDTGDRIRLANEGEAGEHGAPAGDLYVQVHVREHPIFARDGNNLFCEVPVSFTKAALGGDIEVPTLEGKVKLKVPKETQTGKHFRLRGKGVKSVRTGEVGDLICKVMIETPVNLSSKQRDMLEELEDSMGTGDEAAKFRPKEKGFFDGVKQFFDDLRS</sequence>
<organism>
    <name type="scientific">Idiomarina loihiensis (strain ATCC BAA-735 / DSM 15497 / L2-TR)</name>
    <dbReference type="NCBI Taxonomy" id="283942"/>
    <lineage>
        <taxon>Bacteria</taxon>
        <taxon>Pseudomonadati</taxon>
        <taxon>Pseudomonadota</taxon>
        <taxon>Gammaproteobacteria</taxon>
        <taxon>Alteromonadales</taxon>
        <taxon>Idiomarinaceae</taxon>
        <taxon>Idiomarina</taxon>
    </lineage>
</organism>
<gene>
    <name evidence="1" type="primary">dnaJ</name>
    <name type="ordered locus">IL0985</name>
</gene>
<comment type="function">
    <text evidence="1">Participates actively in the response to hyperosmotic and heat shock by preventing the aggregation of stress-denatured proteins and by disaggregating proteins, also in an autonomous, DnaK-independent fashion. Unfolded proteins bind initially to DnaJ; upon interaction with the DnaJ-bound protein, DnaK hydrolyzes its bound ATP, resulting in the formation of a stable complex. GrpE releases ADP from DnaK; ATP binding to DnaK triggers the release of the substrate protein, thus completing the reaction cycle. Several rounds of ATP-dependent interactions between DnaJ, DnaK and GrpE are required for fully efficient folding. Also involved, together with DnaK and GrpE, in the DNA replication of plasmids through activation of initiation proteins.</text>
</comment>
<comment type="cofactor">
    <cofactor evidence="1">
        <name>Zn(2+)</name>
        <dbReference type="ChEBI" id="CHEBI:29105"/>
    </cofactor>
    <text evidence="1">Binds 2 Zn(2+) ions per monomer.</text>
</comment>
<comment type="subunit">
    <text evidence="1">Homodimer.</text>
</comment>
<comment type="subcellular location">
    <subcellularLocation>
        <location evidence="1">Cytoplasm</location>
    </subcellularLocation>
</comment>
<comment type="domain">
    <text evidence="1">The J domain is necessary and sufficient to stimulate DnaK ATPase activity. Zinc center 1 plays an important role in the autonomous, DnaK-independent chaperone activity of DnaJ. Zinc center 2 is essential for interaction with DnaK and for DnaJ activity.</text>
</comment>
<comment type="similarity">
    <text evidence="1">Belongs to the DnaJ family.</text>
</comment>
<name>DNAJ_IDILO</name>
<dbReference type="EMBL" id="AE017340">
    <property type="protein sequence ID" value="AAV81825.1"/>
    <property type="molecule type" value="Genomic_DNA"/>
</dbReference>
<dbReference type="RefSeq" id="WP_011234236.1">
    <property type="nucleotide sequence ID" value="NC_006512.1"/>
</dbReference>
<dbReference type="SMR" id="Q5QXL2"/>
<dbReference type="STRING" id="283942.IL0985"/>
<dbReference type="GeneID" id="41336147"/>
<dbReference type="KEGG" id="ilo:IL0985"/>
<dbReference type="eggNOG" id="COG0484">
    <property type="taxonomic scope" value="Bacteria"/>
</dbReference>
<dbReference type="HOGENOM" id="CLU_017633_0_7_6"/>
<dbReference type="OrthoDB" id="9779889at2"/>
<dbReference type="Proteomes" id="UP000001171">
    <property type="component" value="Chromosome"/>
</dbReference>
<dbReference type="GO" id="GO:0005737">
    <property type="term" value="C:cytoplasm"/>
    <property type="evidence" value="ECO:0007669"/>
    <property type="project" value="UniProtKB-SubCell"/>
</dbReference>
<dbReference type="GO" id="GO:0005524">
    <property type="term" value="F:ATP binding"/>
    <property type="evidence" value="ECO:0007669"/>
    <property type="project" value="InterPro"/>
</dbReference>
<dbReference type="GO" id="GO:0031072">
    <property type="term" value="F:heat shock protein binding"/>
    <property type="evidence" value="ECO:0007669"/>
    <property type="project" value="InterPro"/>
</dbReference>
<dbReference type="GO" id="GO:0051082">
    <property type="term" value="F:unfolded protein binding"/>
    <property type="evidence" value="ECO:0007669"/>
    <property type="project" value="UniProtKB-UniRule"/>
</dbReference>
<dbReference type="GO" id="GO:0008270">
    <property type="term" value="F:zinc ion binding"/>
    <property type="evidence" value="ECO:0007669"/>
    <property type="project" value="UniProtKB-UniRule"/>
</dbReference>
<dbReference type="GO" id="GO:0051085">
    <property type="term" value="P:chaperone cofactor-dependent protein refolding"/>
    <property type="evidence" value="ECO:0007669"/>
    <property type="project" value="TreeGrafter"/>
</dbReference>
<dbReference type="GO" id="GO:0006260">
    <property type="term" value="P:DNA replication"/>
    <property type="evidence" value="ECO:0007669"/>
    <property type="project" value="UniProtKB-KW"/>
</dbReference>
<dbReference type="GO" id="GO:0042026">
    <property type="term" value="P:protein refolding"/>
    <property type="evidence" value="ECO:0007669"/>
    <property type="project" value="TreeGrafter"/>
</dbReference>
<dbReference type="GO" id="GO:0009408">
    <property type="term" value="P:response to heat"/>
    <property type="evidence" value="ECO:0007669"/>
    <property type="project" value="InterPro"/>
</dbReference>
<dbReference type="CDD" id="cd06257">
    <property type="entry name" value="DnaJ"/>
    <property type="match status" value="1"/>
</dbReference>
<dbReference type="CDD" id="cd10747">
    <property type="entry name" value="DnaJ_C"/>
    <property type="match status" value="1"/>
</dbReference>
<dbReference type="CDD" id="cd10719">
    <property type="entry name" value="DnaJ_zf"/>
    <property type="match status" value="1"/>
</dbReference>
<dbReference type="FunFam" id="1.10.287.110:FF:000034">
    <property type="entry name" value="Chaperone protein DnaJ"/>
    <property type="match status" value="1"/>
</dbReference>
<dbReference type="FunFam" id="2.10.230.10:FF:000002">
    <property type="entry name" value="Molecular chaperone DnaJ"/>
    <property type="match status" value="1"/>
</dbReference>
<dbReference type="FunFam" id="2.60.260.20:FF:000004">
    <property type="entry name" value="Molecular chaperone DnaJ"/>
    <property type="match status" value="1"/>
</dbReference>
<dbReference type="Gene3D" id="1.10.287.110">
    <property type="entry name" value="DnaJ domain"/>
    <property type="match status" value="1"/>
</dbReference>
<dbReference type="Gene3D" id="2.10.230.10">
    <property type="entry name" value="Heat shock protein DnaJ, cysteine-rich domain"/>
    <property type="match status" value="1"/>
</dbReference>
<dbReference type="Gene3D" id="2.60.260.20">
    <property type="entry name" value="Urease metallochaperone UreE, N-terminal domain"/>
    <property type="match status" value="2"/>
</dbReference>
<dbReference type="HAMAP" id="MF_01152">
    <property type="entry name" value="DnaJ"/>
    <property type="match status" value="1"/>
</dbReference>
<dbReference type="InterPro" id="IPR012724">
    <property type="entry name" value="DnaJ"/>
</dbReference>
<dbReference type="InterPro" id="IPR002939">
    <property type="entry name" value="DnaJ_C"/>
</dbReference>
<dbReference type="InterPro" id="IPR001623">
    <property type="entry name" value="DnaJ_domain"/>
</dbReference>
<dbReference type="InterPro" id="IPR018253">
    <property type="entry name" value="DnaJ_domain_CS"/>
</dbReference>
<dbReference type="InterPro" id="IPR008971">
    <property type="entry name" value="HSP40/DnaJ_pept-bd"/>
</dbReference>
<dbReference type="InterPro" id="IPR001305">
    <property type="entry name" value="HSP_DnaJ_Cys-rich_dom"/>
</dbReference>
<dbReference type="InterPro" id="IPR036410">
    <property type="entry name" value="HSP_DnaJ_Cys-rich_dom_sf"/>
</dbReference>
<dbReference type="InterPro" id="IPR036869">
    <property type="entry name" value="J_dom_sf"/>
</dbReference>
<dbReference type="NCBIfam" id="TIGR02349">
    <property type="entry name" value="DnaJ_bact"/>
    <property type="match status" value="1"/>
</dbReference>
<dbReference type="NCBIfam" id="NF008035">
    <property type="entry name" value="PRK10767.1"/>
    <property type="match status" value="1"/>
</dbReference>
<dbReference type="PANTHER" id="PTHR43096:SF48">
    <property type="entry name" value="CHAPERONE PROTEIN DNAJ"/>
    <property type="match status" value="1"/>
</dbReference>
<dbReference type="PANTHER" id="PTHR43096">
    <property type="entry name" value="DNAJ HOMOLOG 1, MITOCHONDRIAL-RELATED"/>
    <property type="match status" value="1"/>
</dbReference>
<dbReference type="Pfam" id="PF00226">
    <property type="entry name" value="DnaJ"/>
    <property type="match status" value="1"/>
</dbReference>
<dbReference type="Pfam" id="PF01556">
    <property type="entry name" value="DnaJ_C"/>
    <property type="match status" value="1"/>
</dbReference>
<dbReference type="Pfam" id="PF00684">
    <property type="entry name" value="DnaJ_CXXCXGXG"/>
    <property type="match status" value="1"/>
</dbReference>
<dbReference type="PRINTS" id="PR00625">
    <property type="entry name" value="JDOMAIN"/>
</dbReference>
<dbReference type="SMART" id="SM00271">
    <property type="entry name" value="DnaJ"/>
    <property type="match status" value="1"/>
</dbReference>
<dbReference type="SUPFAM" id="SSF46565">
    <property type="entry name" value="Chaperone J-domain"/>
    <property type="match status" value="1"/>
</dbReference>
<dbReference type="SUPFAM" id="SSF57938">
    <property type="entry name" value="DnaJ/Hsp40 cysteine-rich domain"/>
    <property type="match status" value="1"/>
</dbReference>
<dbReference type="SUPFAM" id="SSF49493">
    <property type="entry name" value="HSP40/DnaJ peptide-binding domain"/>
    <property type="match status" value="2"/>
</dbReference>
<dbReference type="PROSITE" id="PS00636">
    <property type="entry name" value="DNAJ_1"/>
    <property type="match status" value="1"/>
</dbReference>
<dbReference type="PROSITE" id="PS50076">
    <property type="entry name" value="DNAJ_2"/>
    <property type="match status" value="1"/>
</dbReference>
<dbReference type="PROSITE" id="PS51188">
    <property type="entry name" value="ZF_CR"/>
    <property type="match status" value="1"/>
</dbReference>
<proteinExistence type="inferred from homology"/>
<feature type="chain" id="PRO_0000070799" description="Chaperone protein DnaJ">
    <location>
        <begin position="1"/>
        <end position="384"/>
    </location>
</feature>
<feature type="domain" description="J" evidence="1">
    <location>
        <begin position="5"/>
        <end position="70"/>
    </location>
</feature>
<feature type="repeat" description="CXXCXGXG motif">
    <location>
        <begin position="151"/>
        <end position="158"/>
    </location>
</feature>
<feature type="repeat" description="CXXCXGXG motif">
    <location>
        <begin position="168"/>
        <end position="175"/>
    </location>
</feature>
<feature type="repeat" description="CXXCXGXG motif">
    <location>
        <begin position="190"/>
        <end position="197"/>
    </location>
</feature>
<feature type="repeat" description="CXXCXGXG motif">
    <location>
        <begin position="204"/>
        <end position="211"/>
    </location>
</feature>
<feature type="zinc finger region" description="CR-type" evidence="1">
    <location>
        <begin position="138"/>
        <end position="216"/>
    </location>
</feature>
<feature type="binding site" evidence="1">
    <location>
        <position position="151"/>
    </location>
    <ligand>
        <name>Zn(2+)</name>
        <dbReference type="ChEBI" id="CHEBI:29105"/>
        <label>1</label>
    </ligand>
</feature>
<feature type="binding site" evidence="1">
    <location>
        <position position="154"/>
    </location>
    <ligand>
        <name>Zn(2+)</name>
        <dbReference type="ChEBI" id="CHEBI:29105"/>
        <label>1</label>
    </ligand>
</feature>
<feature type="binding site" evidence="1">
    <location>
        <position position="168"/>
    </location>
    <ligand>
        <name>Zn(2+)</name>
        <dbReference type="ChEBI" id="CHEBI:29105"/>
        <label>2</label>
    </ligand>
</feature>
<feature type="binding site" evidence="1">
    <location>
        <position position="171"/>
    </location>
    <ligand>
        <name>Zn(2+)</name>
        <dbReference type="ChEBI" id="CHEBI:29105"/>
        <label>2</label>
    </ligand>
</feature>
<feature type="binding site" evidence="1">
    <location>
        <position position="190"/>
    </location>
    <ligand>
        <name>Zn(2+)</name>
        <dbReference type="ChEBI" id="CHEBI:29105"/>
        <label>2</label>
    </ligand>
</feature>
<feature type="binding site" evidence="1">
    <location>
        <position position="193"/>
    </location>
    <ligand>
        <name>Zn(2+)</name>
        <dbReference type="ChEBI" id="CHEBI:29105"/>
        <label>2</label>
    </ligand>
</feature>
<feature type="binding site" evidence="1">
    <location>
        <position position="204"/>
    </location>
    <ligand>
        <name>Zn(2+)</name>
        <dbReference type="ChEBI" id="CHEBI:29105"/>
        <label>1</label>
    </ligand>
</feature>
<feature type="binding site" evidence="1">
    <location>
        <position position="207"/>
    </location>
    <ligand>
        <name>Zn(2+)</name>
        <dbReference type="ChEBI" id="CHEBI:29105"/>
        <label>1</label>
    </ligand>
</feature>